<organism>
    <name type="scientific">Homo sapiens</name>
    <name type="common">Human</name>
    <dbReference type="NCBI Taxonomy" id="9606"/>
    <lineage>
        <taxon>Eukaryota</taxon>
        <taxon>Metazoa</taxon>
        <taxon>Chordata</taxon>
        <taxon>Craniata</taxon>
        <taxon>Vertebrata</taxon>
        <taxon>Euteleostomi</taxon>
        <taxon>Mammalia</taxon>
        <taxon>Eutheria</taxon>
        <taxon>Euarchontoglires</taxon>
        <taxon>Primates</taxon>
        <taxon>Haplorrhini</taxon>
        <taxon>Catarrhini</taxon>
        <taxon>Hominidae</taxon>
        <taxon>Homo</taxon>
    </lineage>
</organism>
<sequence>MERRARSSSRESRGRGGRTPHKENKRAKAERSGGGRGRQEAGPEPSGSGRAGTPGEPRAPAATVVDVDEVRGSGEEGTEVVALLESERPEEGTKSSGLGACEWLLVLISLLFIIMTFPFSIWFCVKVVQEYERVIIFRLGHLLPGRAKGPGLFFFLPCLDTYHKVDLRLQTLEIPFHEIVTKDMFIMEIDAICYYRMENASLLLSSLAHVSKAVQFLVQTTMKRLLAHRSLTEILLERKSIAQDAKVALDSVTCIWGIKVERIEIKDVRLPAGLQHSLAVEAEAQRQAKVRMIAAEAEKAASESLRMAAEILSGTPAAVQLRYLHTLQSLSTEKPSTVVLPLPFDLLNCLSSPSNRTQGSLPFPSPSKPVEPLNPKKKDSPML</sequence>
<evidence type="ECO:0000250" key="1"/>
<evidence type="ECO:0000255" key="2"/>
<evidence type="ECO:0000256" key="3">
    <source>
        <dbReference type="SAM" id="MobiDB-lite"/>
    </source>
</evidence>
<evidence type="ECO:0000269" key="4">
    <source>
    </source>
</evidence>
<evidence type="ECO:0000269" key="5">
    <source>
    </source>
</evidence>
<evidence type="ECO:0000269" key="6">
    <source>
    </source>
</evidence>
<evidence type="ECO:0000269" key="7">
    <source>
    </source>
</evidence>
<evidence type="ECO:0000269" key="8">
    <source>
    </source>
</evidence>
<evidence type="ECO:0000269" key="9">
    <source>
    </source>
</evidence>
<evidence type="ECO:0000269" key="10">
    <source>
    </source>
</evidence>
<evidence type="ECO:0000269" key="11">
    <source>
    </source>
</evidence>
<evidence type="ECO:0000269" key="12">
    <source>
    </source>
</evidence>
<evidence type="ECO:0000269" key="13">
    <source>
    </source>
</evidence>
<evidence type="ECO:0000269" key="14">
    <source>
    </source>
</evidence>
<evidence type="ECO:0000269" key="15">
    <source>
    </source>
</evidence>
<evidence type="ECO:0000269" key="16">
    <source>
    </source>
</evidence>
<evidence type="ECO:0000269" key="17">
    <source>
    </source>
</evidence>
<evidence type="ECO:0000269" key="18">
    <source>
    </source>
</evidence>
<evidence type="ECO:0000269" key="19">
    <source>
    </source>
</evidence>
<evidence type="ECO:0000269" key="20">
    <source>
    </source>
</evidence>
<evidence type="ECO:0000269" key="21">
    <source>
    </source>
</evidence>
<evidence type="ECO:0000269" key="22">
    <source>
    </source>
</evidence>
<evidence type="ECO:0000269" key="23">
    <source>
    </source>
</evidence>
<evidence type="ECO:0000269" key="24">
    <source>
    </source>
</evidence>
<evidence type="ECO:0000303" key="25">
    <source>
    </source>
</evidence>
<evidence type="ECO:0000303" key="26">
    <source>
    </source>
</evidence>
<evidence type="ECO:0000305" key="27"/>
<keyword id="KW-0025">Alternative splicing</keyword>
<keyword id="KW-1003">Cell membrane</keyword>
<keyword id="KW-0225">Disease variant</keyword>
<keyword id="KW-0256">Endoplasmic reticulum</keyword>
<keyword id="KW-0325">Glycoprotein</keyword>
<keyword id="KW-0449">Lipoprotein</keyword>
<keyword id="KW-0472">Membrane</keyword>
<keyword id="KW-0564">Palmitate</keyword>
<keyword id="KW-1267">Proteomics identification</keyword>
<keyword id="KW-1185">Reference proteome</keyword>
<reference key="1">
    <citation type="journal article" date="2000" name="Nat. Genet.">
        <title>NPHS2, encoding the glomerular protein podocin, is mutated in autosomal recessive steroid-resistant nephrotic syndrome.</title>
        <authorList>
            <person name="Boute N."/>
            <person name="Gribouval O."/>
            <person name="Roselli S."/>
            <person name="Benessy F."/>
            <person name="Lee H."/>
            <person name="Fuchshuber A."/>
            <person name="Dahan K."/>
            <person name="Gubler M.-C."/>
            <person name="Niaudet P."/>
            <person name="Antignac C."/>
        </authorList>
    </citation>
    <scope>NUCLEOTIDE SEQUENCE [GENOMIC DNA / MRNA] (ISOFORM 1)</scope>
    <scope>VARIANTS NPHS2 RP CYS-92; GLN-138; GLY-160; MET-180 AND TRP-291</scope>
    <scope>VARIANT LEU-20</scope>
    <source>
        <tissue>Kidney</tissue>
    </source>
</reference>
<reference key="2">
    <citation type="journal article" date="2000" name="Nat. Genet.">
        <authorList>
            <person name="Boute N."/>
            <person name="Gribouval O."/>
            <person name="Roselli S."/>
            <person name="Benessy F."/>
            <person name="Lee H."/>
            <person name="Fuchshuber A."/>
            <person name="Dahan K."/>
            <person name="Gubler M.-C."/>
            <person name="Niaudet P."/>
            <person name="Antignac C."/>
        </authorList>
    </citation>
    <scope>ERRATUM OF PUBMED:10742096</scope>
</reference>
<reference key="3">
    <citation type="journal article" date="2006" name="Nature">
        <title>The DNA sequence and biological annotation of human chromosome 1.</title>
        <authorList>
            <person name="Gregory S.G."/>
            <person name="Barlow K.F."/>
            <person name="McLay K.E."/>
            <person name="Kaul R."/>
            <person name="Swarbreck D."/>
            <person name="Dunham A."/>
            <person name="Scott C.E."/>
            <person name="Howe K.L."/>
            <person name="Woodfine K."/>
            <person name="Spencer C.C.A."/>
            <person name="Jones M.C."/>
            <person name="Gillson C."/>
            <person name="Searle S."/>
            <person name="Zhou Y."/>
            <person name="Kokocinski F."/>
            <person name="McDonald L."/>
            <person name="Evans R."/>
            <person name="Phillips K."/>
            <person name="Atkinson A."/>
            <person name="Cooper R."/>
            <person name="Jones C."/>
            <person name="Hall R.E."/>
            <person name="Andrews T.D."/>
            <person name="Lloyd C."/>
            <person name="Ainscough R."/>
            <person name="Almeida J.P."/>
            <person name="Ambrose K.D."/>
            <person name="Anderson F."/>
            <person name="Andrew R.W."/>
            <person name="Ashwell R.I.S."/>
            <person name="Aubin K."/>
            <person name="Babbage A.K."/>
            <person name="Bagguley C.L."/>
            <person name="Bailey J."/>
            <person name="Beasley H."/>
            <person name="Bethel G."/>
            <person name="Bird C.P."/>
            <person name="Bray-Allen S."/>
            <person name="Brown J.Y."/>
            <person name="Brown A.J."/>
            <person name="Buckley D."/>
            <person name="Burton J."/>
            <person name="Bye J."/>
            <person name="Carder C."/>
            <person name="Chapman J.C."/>
            <person name="Clark S.Y."/>
            <person name="Clarke G."/>
            <person name="Clee C."/>
            <person name="Cobley V."/>
            <person name="Collier R.E."/>
            <person name="Corby N."/>
            <person name="Coville G.J."/>
            <person name="Davies J."/>
            <person name="Deadman R."/>
            <person name="Dunn M."/>
            <person name="Earthrowl M."/>
            <person name="Ellington A.G."/>
            <person name="Errington H."/>
            <person name="Frankish A."/>
            <person name="Frankland J."/>
            <person name="French L."/>
            <person name="Garner P."/>
            <person name="Garnett J."/>
            <person name="Gay L."/>
            <person name="Ghori M.R.J."/>
            <person name="Gibson R."/>
            <person name="Gilby L.M."/>
            <person name="Gillett W."/>
            <person name="Glithero R.J."/>
            <person name="Grafham D.V."/>
            <person name="Griffiths C."/>
            <person name="Griffiths-Jones S."/>
            <person name="Grocock R."/>
            <person name="Hammond S."/>
            <person name="Harrison E.S.I."/>
            <person name="Hart E."/>
            <person name="Haugen E."/>
            <person name="Heath P.D."/>
            <person name="Holmes S."/>
            <person name="Holt K."/>
            <person name="Howden P.J."/>
            <person name="Hunt A.R."/>
            <person name="Hunt S.E."/>
            <person name="Hunter G."/>
            <person name="Isherwood J."/>
            <person name="James R."/>
            <person name="Johnson C."/>
            <person name="Johnson D."/>
            <person name="Joy A."/>
            <person name="Kay M."/>
            <person name="Kershaw J.K."/>
            <person name="Kibukawa M."/>
            <person name="Kimberley A.M."/>
            <person name="King A."/>
            <person name="Knights A.J."/>
            <person name="Lad H."/>
            <person name="Laird G."/>
            <person name="Lawlor S."/>
            <person name="Leongamornlert D.A."/>
            <person name="Lloyd D.M."/>
            <person name="Loveland J."/>
            <person name="Lovell J."/>
            <person name="Lush M.J."/>
            <person name="Lyne R."/>
            <person name="Martin S."/>
            <person name="Mashreghi-Mohammadi M."/>
            <person name="Matthews L."/>
            <person name="Matthews N.S.W."/>
            <person name="McLaren S."/>
            <person name="Milne S."/>
            <person name="Mistry S."/>
            <person name="Moore M.J.F."/>
            <person name="Nickerson T."/>
            <person name="O'Dell C.N."/>
            <person name="Oliver K."/>
            <person name="Palmeiri A."/>
            <person name="Palmer S.A."/>
            <person name="Parker A."/>
            <person name="Patel D."/>
            <person name="Pearce A.V."/>
            <person name="Peck A.I."/>
            <person name="Pelan S."/>
            <person name="Phelps K."/>
            <person name="Phillimore B.J."/>
            <person name="Plumb R."/>
            <person name="Rajan J."/>
            <person name="Raymond C."/>
            <person name="Rouse G."/>
            <person name="Saenphimmachak C."/>
            <person name="Sehra H.K."/>
            <person name="Sheridan E."/>
            <person name="Shownkeen R."/>
            <person name="Sims S."/>
            <person name="Skuce C.D."/>
            <person name="Smith M."/>
            <person name="Steward C."/>
            <person name="Subramanian S."/>
            <person name="Sycamore N."/>
            <person name="Tracey A."/>
            <person name="Tromans A."/>
            <person name="Van Helmond Z."/>
            <person name="Wall M."/>
            <person name="Wallis J.M."/>
            <person name="White S."/>
            <person name="Whitehead S.L."/>
            <person name="Wilkinson J.E."/>
            <person name="Willey D.L."/>
            <person name="Williams H."/>
            <person name="Wilming L."/>
            <person name="Wray P.W."/>
            <person name="Wu Z."/>
            <person name="Coulson A."/>
            <person name="Vaudin M."/>
            <person name="Sulston J.E."/>
            <person name="Durbin R.M."/>
            <person name="Hubbard T."/>
            <person name="Wooster R."/>
            <person name="Dunham I."/>
            <person name="Carter N.P."/>
            <person name="McVean G."/>
            <person name="Ross M.T."/>
            <person name="Harrow J."/>
            <person name="Olson M.V."/>
            <person name="Beck S."/>
            <person name="Rogers J."/>
            <person name="Bentley D.R."/>
        </authorList>
    </citation>
    <scope>NUCLEOTIDE SEQUENCE [LARGE SCALE GENOMIC DNA]</scope>
</reference>
<reference key="4">
    <citation type="submission" date="2005-07" db="EMBL/GenBank/DDBJ databases">
        <authorList>
            <person name="Mural R.J."/>
            <person name="Istrail S."/>
            <person name="Sutton G.G."/>
            <person name="Florea L."/>
            <person name="Halpern A.L."/>
            <person name="Mobarry C.M."/>
            <person name="Lippert R."/>
            <person name="Walenz B."/>
            <person name="Shatkay H."/>
            <person name="Dew I."/>
            <person name="Miller J.R."/>
            <person name="Flanigan M.J."/>
            <person name="Edwards N.J."/>
            <person name="Bolanos R."/>
            <person name="Fasulo D."/>
            <person name="Halldorsson B.V."/>
            <person name="Hannenhalli S."/>
            <person name="Turner R."/>
            <person name="Yooseph S."/>
            <person name="Lu F."/>
            <person name="Nusskern D.R."/>
            <person name="Shue B.C."/>
            <person name="Zheng X.H."/>
            <person name="Zhong F."/>
            <person name="Delcher A.L."/>
            <person name="Huson D.H."/>
            <person name="Kravitz S.A."/>
            <person name="Mouchard L."/>
            <person name="Reinert K."/>
            <person name="Remington K.A."/>
            <person name="Clark A.G."/>
            <person name="Waterman M.S."/>
            <person name="Eichler E.E."/>
            <person name="Adams M.D."/>
            <person name="Hunkapiller M.W."/>
            <person name="Myers E.W."/>
            <person name="Venter J.C."/>
        </authorList>
    </citation>
    <scope>NUCLEOTIDE SEQUENCE [LARGE SCALE GENOMIC DNA]</scope>
</reference>
<reference key="5">
    <citation type="journal article" date="2004" name="Genome Res.">
        <title>The status, quality, and expansion of the NIH full-length cDNA project: the Mammalian Gene Collection (MGC).</title>
        <authorList>
            <consortium name="The MGC Project Team"/>
        </authorList>
    </citation>
    <scope>NUCLEOTIDE SEQUENCE [LARGE SCALE MRNA] (ISOFORM 2)</scope>
    <source>
        <tissue>Colon</tissue>
        <tissue>Kidney</tissue>
    </source>
</reference>
<reference key="6">
    <citation type="journal article" date="2001" name="J. Biol. Chem.">
        <title>Interaction with podocin facilitates nephrin signaling.</title>
        <authorList>
            <person name="Huber T.B."/>
            <person name="Kottgen M."/>
            <person name="Schilling B."/>
            <person name="Walz G."/>
            <person name="Benzing T."/>
        </authorList>
    </citation>
    <scope>INTERACTION WITH NPHS1</scope>
</reference>
<reference key="7">
    <citation type="journal article" date="2013" name="BMC Nephrol.">
        <title>Characterization of a short isoform of the kidney protein podocin in human kidney.</title>
        <authorList>
            <person name="Volker L.A."/>
            <person name="Schurek E.M."/>
            <person name="Rinschen M.M."/>
            <person name="Tax J."/>
            <person name="Schutte B.A."/>
            <person name="Lamkemeyer T."/>
            <person name="Ungrue D."/>
            <person name="Schermer B."/>
            <person name="Benzing T."/>
            <person name="Hohne M."/>
        </authorList>
    </citation>
    <scope>ALTERNATIVE SPLICING (ISOFORM 2)</scope>
    <scope>SUBCELLULAR LOCATION (ISOFORM 2)</scope>
    <scope>GLYCOSYLATION AT ASN-287 (ISOFORM 2)</scope>
    <source>
        <tissue>Kidney</tissue>
    </source>
</reference>
<reference key="8">
    <citation type="journal article" date="2002" name="J. Clin. Invest.">
        <title>NPHS2 mutations in late-onset focal segmental glomerulosclerosis: R229Q is a common disease-associated allele.</title>
        <authorList>
            <person name="Tsukaguchi H."/>
            <person name="Sudhakar A."/>
            <person name="Le T.C."/>
            <person name="Nguyen T."/>
            <person name="Yao J."/>
            <person name="Schwimmer J.A."/>
            <person name="Schachter A.D."/>
            <person name="Poch E."/>
            <person name="Abreu P.F."/>
            <person name="Appel G.B."/>
            <person name="Pereira A.B."/>
            <person name="Kalluri R."/>
            <person name="Pollak M.R."/>
        </authorList>
    </citation>
    <scope>VARIANT NPHS2 GLN-229</scope>
    <scope>INVOLVEMENT IN NPHS2</scope>
</reference>
<reference key="9">
    <citation type="journal article" date="2003" name="Pediatr. Nephrol.">
        <title>NPHS2 mutations in sporadic steroid-resistant nephrotic syndrome in Japanese children.</title>
        <authorList>
            <person name="Maruyama K."/>
            <person name="Iijima K."/>
            <person name="Ikeda M."/>
            <person name="Kitamura A."/>
            <person name="Tsukaguchi H."/>
            <person name="Yoshiya K."/>
            <person name="Hoshii S."/>
            <person name="Wada N."/>
            <person name="Uemura O."/>
            <person name="Satomura K."/>
            <person name="Honda M."/>
            <person name="Yoshikawa N."/>
        </authorList>
    </citation>
    <scope>VARIANT GLU-34</scope>
</reference>
<reference key="10">
    <citation type="journal article" date="2004" name="Kidney Int.">
        <title>NPHS2 mutation analysis shows genetic heterogeneity of steroid-resistant nephrotic syndrome and low post-transplant recurrence.</title>
        <authorList>
            <person name="Weber S."/>
            <person name="Gribouval O."/>
            <person name="Esquivel E.L."/>
            <person name="Moriniere V."/>
            <person name="Tete M.J."/>
            <person name="Legendre C."/>
            <person name="Niaudet P."/>
            <person name="Antignac C."/>
        </authorList>
    </citation>
    <scope>VARIANTS NPHS2 THR-29; LEU-118; CYS-168; HIS-168; SER-168; VAL-172; THR-208; 236-LEU--ARG-238 DEL; SER-238 AND GLU-260</scope>
    <scope>VARIANTS VAL-61; GLN-237 AND VAL-242</scope>
</reference>
<reference key="11">
    <citation type="journal article" date="2005" name="Kidney Int.">
        <title>Identification of podocin (NPHS2) gene mutations in African Americans with nondiabetic end-stage renal disease.</title>
        <authorList>
            <person name="Dusel J.A."/>
            <person name="Burdon K.P."/>
            <person name="Hicks P.J."/>
            <person name="Hawkins G.A."/>
            <person name="Bowden D.W."/>
            <person name="Freedman B.I."/>
        </authorList>
    </citation>
    <scope>VARIANTS ALA-44 AND VAL-61</scope>
</reference>
<reference key="12">
    <citation type="journal article" date="2007" name="Pediatr. Nephrol.">
        <title>NPHS2 (podicin) mutations in Turkish children with idiopathic nephrotic syndrome.</title>
        <authorList>
            <person name="Berdeli A."/>
            <person name="Mir S."/>
            <person name="Yavascan O."/>
            <person name="Serdaroglu E."/>
            <person name="Bak M."/>
            <person name="Aksu N."/>
            <person name="Oner A."/>
            <person name="Anarat A."/>
            <person name="Donmez O."/>
            <person name="Yildiz N."/>
            <person name="Sever L."/>
            <person name="Tabel Y."/>
            <person name="Dusunsel R."/>
            <person name="Sonmez F."/>
            <person name="Cakar N."/>
        </authorList>
    </citation>
    <scope>VARIANTS NPHS2 GLY-3; THR-18; MET-26; MET-28; GLN-30; LYS-30; LEU-39; THR-89; THR-115; LEU-122; TRP-124; VAL-192; ALA-211; THR-213; GLY-218; ASP-228; LEU-229; ASN-267; LEU-268; LEU-276; ALA-301 DEL; GLN-322 AND GLY-370</scope>
</reference>
<reference key="13">
    <citation type="journal article" date="2010" name="Clin. J. Am. Soc. Nephrol.">
        <title>Immunosuppression and renal outcome in congenital and pediatric steroid-resistant nephrotic syndrome.</title>
        <authorList>
            <person name="Buescher A.K."/>
            <person name="Kranz B."/>
            <person name="Buescher R."/>
            <person name="Hildebrandt F."/>
            <person name="Dworniczak B."/>
            <person name="Pennekamp P."/>
            <person name="Kuwertz-Broeking E."/>
            <person name="Wingen A.M."/>
            <person name="John U."/>
            <person name="Kemper M."/>
            <person name="Monnens L."/>
            <person name="Hoyer P.F."/>
            <person name="Weber S."/>
            <person name="Konrad M."/>
        </authorList>
    </citation>
    <scope>VARIANTS NPHS2 138-ARG--LEU-383 DEL; GLN-138; HIS-168; GLN-229; TRP-291; VAL-310 AND ARG-328</scope>
    <scope>VARIANTS MET-290 AND VAL-297</scope>
</reference>
<reference key="14">
    <citation type="journal article" date="2011" name="Am. J. Hum. Genet.">
        <title>Disruption of PTPRO causes childhood-onset nephrotic syndrome.</title>
        <authorList>
            <person name="Ozaltin F."/>
            <person name="Ibsirlioglu T."/>
            <person name="Taskiran E.Z."/>
            <person name="Baydar D.E."/>
            <person name="Kaymaz F."/>
            <person name="Buyukcelik M."/>
            <person name="Kilic B.D."/>
            <person name="Balat A."/>
            <person name="Iatropoulos P."/>
            <person name="Asan E."/>
            <person name="Akarsu N.A."/>
            <person name="Schaefer F."/>
            <person name="Yilmaz E."/>
            <person name="Bakkaloglu A."/>
        </authorList>
    </citation>
    <scope>VARIANT GLN-229</scope>
</reference>
<reference key="15">
    <citation type="journal article" date="2011" name="Clin. J. Am. Soc. Nephrol.">
        <title>Clinical value of NPHS2 analysis in early- and adult-onset steroid-resistant nephrotic syndrome.</title>
        <authorList>
            <person name="Santin S."/>
            <person name="Tazon-Vega B."/>
            <person name="Silva I."/>
            <person name="Cobo M.A."/>
            <person name="Gimenez I."/>
            <person name="Ruiz P."/>
            <person name="Garcia-Maset R."/>
            <person name="Ballarin J."/>
            <person name="Torra R."/>
            <person name="Ars E."/>
            <person name="Fraga G."/>
            <person name="Mendizabel S."/>
            <person name="Zamora I."/>
            <person name="Pena A."/>
            <person name="Espinosa L."/>
            <person name="Garcia C."/>
            <person name="Melgosa M."/>
            <person name="Navarro M."/>
            <person name="Lopez-Hellin J."/>
            <person name="Chocron S."/>
            <person name="Madrid A."/>
            <person name="Vilalta R."/>
            <person name="Nieto J.L."/>
            <person name="Ventura C."/>
            <person name="Gimenez A."/>
            <person name="Cots J.V."/>
            <person name="Camacho J.A."/>
            <person name="Sanchez-Moreno A."/>
            <person name="de la Cerda F."/>
            <person name="Salido E."/>
            <person name="Ortiz A."/>
            <person name="Alexandra S."/>
            <person name="Caramelo C."/>
            <person name="Egido J."/>
            <person name="Bernis C."/>
            <person name="Luque de Pablos A."/>
            <person name="Morales San Jose M.D."/>
            <person name="Pintos G."/>
            <person name="Sala P."/>
            <person name="Raspall F."/>
            <person name="Vila A."/>
            <person name="Daza M."/>
            <person name="Vazquez M."/>
            <person name="Ecija L."/>
            <person name="Espinosa M."/>
            <person name="Poveda R."/>
            <person name="Mirapeix E."/>
            <person name="Vallejo G."/>
            <person name="Aparicio C."/>
            <person name="Rosell J."/>
            <person name="de Sotto D."/>
            <person name="Muley R."/>
            <person name="Montenegro J."/>
            <person name="Gonzalez D."/>
            <person name="Barajas de Frutos D."/>
            <person name="Trillo E."/>
            <person name="Gainza de los Rios F.J."/>
            <person name="Justa M.L."/>
            <person name="Hidalgo-Barquero E."/>
        </authorList>
    </citation>
    <scope>VARIANTS NPHS2 PRO-116; ILE-187; ILE-221 AND ALA-281</scope>
    <scope>VARIANT GLN-264</scope>
</reference>
<reference key="16">
    <citation type="journal article" date="2012" name="Folia Biol. (Praha)">
        <title>Mutational analysis of the NPHS2 gene in Czech patients with idiopathic nephrotic syndrome.</title>
        <authorList>
            <person name="Reiterova J."/>
            <person name="Safrankova H."/>
            <person name="Obeidova L."/>
            <person name="Stekrova J."/>
            <person name="Maixnerova D."/>
            <person name="Merta M."/>
            <person name="Tesar V."/>
        </authorList>
    </citation>
    <scope>VARIANT NPHS2 MET-290</scope>
</reference>
<reference key="17">
    <citation type="journal article" date="2012" name="Gene">
        <title>A spectrum of novel NPHS1 and NPHS2 gene mutations in pediatric nephrotic syndrome patients from Pakistan.</title>
        <authorList>
            <person name="Abid A."/>
            <person name="Khaliq S."/>
            <person name="Shahid S."/>
            <person name="Lanewala A."/>
            <person name="Mubarak M."/>
            <person name="Hashmi S."/>
            <person name="Kazi J."/>
            <person name="Masood T."/>
            <person name="Hafeez F."/>
            <person name="Naqvi S.A."/>
            <person name="Rizvi S.A."/>
            <person name="Mehdi S.Q."/>
        </authorList>
    </citation>
    <scope>VARIANTS NPHS2 ASN-126; GLU-260 AND SER-341</scope>
</reference>
<reference key="18">
    <citation type="journal article" date="2013" name="Genet. Mol. Res.">
        <title>Mutations in NPHS2 (podocin) in Mexican children with nephrotic syndrome who respond to standard steroid treatment.</title>
        <authorList>
            <person name="Carrasco-Miranda J.S."/>
            <person name="Garcia-Alvarez R."/>
            <person name="Sotelo-Mundo R.R."/>
            <person name="Valenzuela O."/>
            <person name="Islas-Osuna M.A."/>
            <person name="Sotelo-Cruz N."/>
        </authorList>
    </citation>
    <scope>VARIANTS NPHS2 ARG-139 AND PRO-142</scope>
</reference>
<reference key="19">
    <citation type="journal article" date="2013" name="Iran. J. Kidney Dis.">
        <title>NPHS2 gene in steroid-resistant nephrotic syndrome: prevalence, clinical course, and mutational spectrum in South-West Iranian children.</title>
        <authorList>
            <person name="Basiratnia M."/>
            <person name="Yavarian M."/>
            <person name="Torabinezhad S."/>
            <person name="Erjaee A."/>
        </authorList>
    </citation>
    <scope>VARIANTS NPHS2 LEU-118; GLY-160; CYS-168; MET-180 AND SER-238</scope>
</reference>
<reference key="20">
    <citation type="journal article" date="2013" name="J. Hum. Genet.">
        <title>A molecular genetic analysis of childhood nephrotic syndrome in a cohort of Saudi Arabian families.</title>
        <authorList>
            <person name="Al-Hamed M.H."/>
            <person name="Al-Sabban E."/>
            <person name="Al-Mojalli H."/>
            <person name="Al-Harbi N."/>
            <person name="Faqeih E."/>
            <person name="Al Shaya H."/>
            <person name="Alhasan K."/>
            <person name="Al-Hissi S."/>
            <person name="Rajab M."/>
            <person name="Edwards N."/>
            <person name="Al-Abbad A."/>
            <person name="Al-Hassoun I."/>
            <person name="Sayer J.A."/>
            <person name="Meyer B.F."/>
        </authorList>
    </citation>
    <scope>VARIANTS NPHS2 39-GLN--LEU-383 DEL; PRO-138; HIS-168; MET-180; PHE-254 AND GLU-260</scope>
    <scope>VARIANT GLN-237</scope>
</reference>
<reference key="21">
    <citation type="journal article" date="2013" name="Pediatr. Nephrol.">
        <title>NPHS2 p.V290M mutation in late-onset steroid-resistant nephrotic syndrome.</title>
        <authorList>
            <person name="Kerti A."/>
            <person name="Csohany R."/>
            <person name="Szabo A."/>
            <person name="Arkossy O."/>
            <person name="Sallay P."/>
            <person name="Moriniere V."/>
            <person name="Vega-Warner V."/>
            <person name="Nyiro G."/>
            <person name="Lakatos O."/>
            <person name="Szabo T."/>
            <person name="Lipska B.S."/>
            <person name="Schaefer F."/>
            <person name="Antignac C."/>
            <person name="Reusz G."/>
            <person name="Tulassay T."/>
            <person name="Tory K."/>
        </authorList>
    </citation>
    <scope>VARIANTS NPHS2 GLN-138 AND MET-290</scope>
</reference>
<reference key="22">
    <citation type="journal article" date="2013" name="Pediatr. Nephrol.">
        <title>NPHS2 homozygous p.R229Q variant: potential modifier instead of causal effect in focal segmental glomerulosclerosis.</title>
        <authorList>
            <person name="Kerti A."/>
            <person name="Csohany R."/>
            <person name="Wagner L."/>
            <person name="Javorszky E."/>
            <person name="Maka E."/>
            <person name="Tory K."/>
        </authorList>
    </citation>
    <scope>VARIANT NPHS2 GLN-229</scope>
    <scope>POSSIBLE ROLE AS DISEASE MODIFIER IN NPHS2</scope>
</reference>
<reference key="23">
    <citation type="journal article" date="2014" name="Hum. Mutat.">
        <title>NPHS2 mutations in steroid-resistant nephrotic syndrome: a mutation update and the associated phenotypic spectrum.</title>
        <authorList>
            <person name="Bouchireb K."/>
            <person name="Boyer O."/>
            <person name="Gribouval O."/>
            <person name="Nevo F."/>
            <person name="Huynh-Cong E."/>
            <person name="Moriniere V."/>
            <person name="Campait R."/>
            <person name="Ars E."/>
            <person name="Brackman D."/>
            <person name="Dantal J."/>
            <person name="Eckart P."/>
            <person name="Gigante M."/>
            <person name="Lipska B.S."/>
            <person name="Liutkus A."/>
            <person name="Megarbane A."/>
            <person name="Mohsin N."/>
            <person name="Ozaltin F."/>
            <person name="Saleem M.A."/>
            <person name="Schaefer F."/>
            <person name="Soulami K."/>
            <person name="Torra R."/>
            <person name="Garcelon N."/>
            <person name="Mollet G."/>
            <person name="Dahan K."/>
            <person name="Antignac C."/>
        </authorList>
    </citation>
    <scope>VARIANTS NPHS2 SER-97; PRO-107; SER-122; VAL-175; TYR-183; LYS-281; LYS-296; VAL-309; ILE-315 AND GLY-333</scope>
    <scope>VARIANTS LEU-20; GLN-237 AND GLN-264</scope>
</reference>
<reference key="24">
    <citation type="journal article" date="2014" name="Nat. Genet.">
        <title>Mutation-dependent recessive inheritance of NPHS2-associated steroid-resistant nephrotic syndrome.</title>
        <authorList>
            <person name="Tory K."/>
            <person name="Menyhard D.K."/>
            <person name="Woerner S."/>
            <person name="Nevo F."/>
            <person name="Gribouval O."/>
            <person name="Kerti A."/>
            <person name="Straner P."/>
            <person name="Arrondel C."/>
            <person name="Cong E.H."/>
            <person name="Tulassay T."/>
            <person name="Mollet G."/>
            <person name="Perczel A."/>
            <person name="Antignac C."/>
        </authorList>
    </citation>
    <scope>VARIANT NPHS2 GLN-229</scope>
</reference>
<reference key="25">
    <citation type="journal article" date="2015" name="BMC Med. Genet.">
        <title>NPHS2 mutations account for only 15% of nephrotic syndrome cases.</title>
        <authorList>
            <person name="Guaragna M.S."/>
            <person name="Lutaif A.C."/>
            <person name="Piveta C.S."/>
            <person name="Souza M.L."/>
            <person name="de Souza S.R."/>
            <person name="Henriques T.B."/>
            <person name="Maciel-Guerra A.T."/>
            <person name="Belangero V.M."/>
            <person name="Guerra-Junior G."/>
            <person name="De Mello M.P."/>
        </authorList>
    </citation>
    <scope>VARIANTS NPHS2 GLN-229; GLU-260; VAL-284 AND LYS-310</scope>
</reference>
<reference key="26">
    <citation type="journal article" date="2016" name="Eur. J. Hum. Genet.">
        <title>Expansion of phenotype and genotypic data in CRB2-related syndrome.</title>
        <authorList>
            <person name="Lamont R.E."/>
            <person name="Tan W.H."/>
            <person name="Innes A.M."/>
            <person name="Parboosingh J.S."/>
            <person name="Schneidman-Duhovny D."/>
            <person name="Rajkovic A."/>
            <person name="Pappas J."/>
            <person name="Altschwager P."/>
            <person name="DeWard S."/>
            <person name="Fulton A."/>
            <person name="Gray K.J."/>
            <person name="Krall M."/>
            <person name="Mehta L."/>
            <person name="Rodan L.H."/>
            <person name="Saller D.N. Jr."/>
            <person name="Steele D."/>
            <person name="Stein D."/>
            <person name="Yatsenko S.A."/>
            <person name="Bernier F.P."/>
            <person name="Slavotinek A.M."/>
        </authorList>
    </citation>
    <scope>VARIANT NPHS2 GLN-229</scope>
</reference>
<comment type="function">
    <text>Plays a role in the regulation of glomerular permeability, acting probably as a linker between the plasma membrane and the cytoskeleton.</text>
</comment>
<comment type="subunit">
    <text evidence="1">Interacts with nephrin/NPHS1 and KIRREL1. Interacts directly with CD2AP. Interacts with DDN (By similarity).</text>
</comment>
<comment type="interaction">
    <interactant intactId="EBI-6897706">
        <id>Q9NP85</id>
    </interactant>
    <interactant intactId="EBI-297509">
        <id>P46940</id>
        <label>IQGAP1</label>
    </interactant>
    <organismsDiffer>false</organismsDiffer>
    <experiments>4</experiments>
</comment>
<comment type="subcellular location">
    <molecule>Isoform 1</molecule>
    <subcellularLocation>
        <location evidence="27">Cell membrane</location>
        <topology evidence="27">Peripheral membrane protein</topology>
    </subcellularLocation>
</comment>
<comment type="subcellular location">
    <molecule>Isoform 2</molecule>
    <subcellularLocation>
        <location evidence="17">Endoplasmic reticulum</location>
    </subcellularLocation>
</comment>
<comment type="alternative products">
    <event type="alternative splicing"/>
    <isoform>
        <id>Q9NP85-1</id>
        <name>1</name>
        <sequence type="displayed"/>
    </isoform>
    <isoform>
        <id>Q9NP85-2</id>
        <name>2</name>
        <name>Pod-short</name>
        <sequence type="described" ref="VSP_000499"/>
    </isoform>
</comment>
<comment type="tissue specificity">
    <text>Almost exclusively expressed in the podocytes of fetal and mature kidney glomeruli.</text>
</comment>
<comment type="PTM">
    <molecule>Isoform 2</molecule>
    <text evidence="17">Glycosylated.</text>
</comment>
<comment type="disease" evidence="4 5 7 9 10 11 13 14 15 16 18 19 20 21 22 23 24">
    <disease id="DI-01260">
        <name>Nephrotic syndrome 2</name>
        <acronym>NPHS2</acronym>
        <description>A form of nephrotic syndrome, a renal disease clinically characterized by severe proteinuria, resulting in complications such as hypoalbuminemia, hyperlipidemia and edema. Kidney biopsies show non-specific histologic changes such as focal segmental glomerulosclerosis and diffuse mesangial proliferation. The disorder is resistant to steroid treatment and progresses to end-stage renal failure in the first or second decades. Some patients show later onset of the disorder.</description>
        <dbReference type="MIM" id="600995"/>
    </disease>
    <text>The disease is caused by variants affecting the gene represented in this entry.</text>
</comment>
<comment type="similarity">
    <text evidence="27">Belongs to the band 7/mec-2 family.</text>
</comment>
<comment type="online information" name="Nephrosis 2, idiopathic, steroid-resistant (podocin) (NPHS2)">
    <link uri="https://databases.lovd.nl/shared/genes/NPHS2"/>
    <text>Leiden Open Variation Database (LOVD)</text>
</comment>
<name>PODO_HUMAN</name>
<feature type="chain" id="PRO_0000094035" description="Podocin">
    <location>
        <begin position="1"/>
        <end position="383"/>
    </location>
</feature>
<feature type="topological domain" description="Cytoplasmic" evidence="2">
    <location>
        <begin position="1"/>
        <end position="102"/>
    </location>
</feature>
<feature type="intramembrane region" evidence="2">
    <location>
        <begin position="103"/>
        <end position="123"/>
    </location>
</feature>
<feature type="topological domain" description="Cytoplasmic" evidence="2">
    <location>
        <begin position="124"/>
        <end position="383"/>
    </location>
</feature>
<feature type="region of interest" description="Disordered" evidence="3">
    <location>
        <begin position="1"/>
        <end position="76"/>
    </location>
</feature>
<feature type="region of interest" description="Disordered" evidence="3">
    <location>
        <begin position="355"/>
        <end position="383"/>
    </location>
</feature>
<feature type="compositionally biased region" description="Basic and acidic residues" evidence="3">
    <location>
        <begin position="1"/>
        <end position="41"/>
    </location>
</feature>
<feature type="compositionally biased region" description="Basic and acidic residues" evidence="3">
    <location>
        <begin position="374"/>
        <end position="383"/>
    </location>
</feature>
<feature type="lipid moiety-binding region" description="S-palmitoyl cysteine" evidence="1">
    <location>
        <position position="101"/>
    </location>
</feature>
<feature type="splice variant" id="VSP_000499" description="In isoform 2." evidence="26">
    <location>
        <begin position="179"/>
        <end position="246"/>
    </location>
</feature>
<feature type="sequence variant" id="VAR_072134" description="In NPHS2." evidence="9">
    <original>R</original>
    <variation>G</variation>
    <location>
        <position position="3"/>
    </location>
</feature>
<feature type="sequence variant" id="VAR_072135" description="In NPHS2." evidence="9">
    <original>R</original>
    <variation>T</variation>
    <location>
        <position position="18"/>
    </location>
</feature>
<feature type="sequence variant" id="VAR_010231" description="In dbSNP:rs74315344." evidence="4 21">
    <original>P</original>
    <variation>L</variation>
    <location>
        <position position="20"/>
    </location>
</feature>
<feature type="sequence variant" id="VAR_072136" description="In NPHS2." evidence="9">
    <original>R</original>
    <variation>M</variation>
    <location>
        <position position="26"/>
    </location>
</feature>
<feature type="sequence variant" id="VAR_072137" description="In NPHS2; dbSNP:rs1340195940." evidence="9">
    <original>K</original>
    <variation>M</variation>
    <location>
        <position position="28"/>
    </location>
</feature>
<feature type="sequence variant" id="VAR_071212" description="In NPHS2; dbSNP:rs561887984." evidence="7">
    <original>A</original>
    <variation>T</variation>
    <location>
        <position position="29"/>
    </location>
</feature>
<feature type="sequence variant" id="VAR_072138" description="In NPHS2; dbSNP:rs1477180313." evidence="9">
    <original>E</original>
    <variation>K</variation>
    <location>
        <position position="30"/>
    </location>
</feature>
<feature type="sequence variant" id="VAR_072139" description="In NPHS2." evidence="9">
    <original>E</original>
    <variation>Q</variation>
    <location>
        <position position="30"/>
    </location>
</feature>
<feature type="sequence variant" id="VAR_071213" description="In dbSNP:rs1674742844." evidence="6">
    <original>G</original>
    <variation>E</variation>
    <location>
        <position position="34"/>
    </location>
</feature>
<feature type="sequence variant" id="VAR_087597" description="In NPHS2." evidence="16">
    <location>
        <begin position="39"/>
        <end position="383"/>
    </location>
</feature>
<feature type="sequence variant" id="VAR_072140" description="In NPHS2." evidence="9">
    <original>Q</original>
    <variation>L</variation>
    <location>
        <position position="39"/>
    </location>
</feature>
<feature type="sequence variant" id="VAR_071214" evidence="8">
    <original>E</original>
    <variation>A</variation>
    <location>
        <position position="44"/>
    </location>
</feature>
<feature type="sequence variant" id="VAR_071215" description="In dbSNP:rs201050491." evidence="7 8">
    <original>A</original>
    <variation>V</variation>
    <location>
        <position position="61"/>
    </location>
</feature>
<feature type="sequence variant" id="VAR_072141" description="In NPHS2." evidence="9">
    <original>P</original>
    <variation>T</variation>
    <location>
        <position position="89"/>
    </location>
</feature>
<feature type="sequence variant" id="VAR_010232" description="In NPHS2; dbSNP:rs74315345." evidence="4">
    <original>G</original>
    <variation>C</variation>
    <location>
        <position position="92"/>
    </location>
</feature>
<feature type="sequence variant" id="VAR_071216" description="In NPHS2; uncertain significance; dbSNP:rs200913299." evidence="21">
    <original>G</original>
    <variation>S</variation>
    <location>
        <position position="97"/>
    </location>
</feature>
<feature type="sequence variant" id="VAR_071217" description="In NPHS2." evidence="21">
    <original>L</original>
    <variation>P</variation>
    <location>
        <position position="107"/>
    </location>
</feature>
<feature type="sequence variant" id="VAR_072142" description="In NPHS2." evidence="9">
    <original>M</original>
    <variation>T</variation>
    <location>
        <position position="115"/>
    </location>
</feature>
<feature type="sequence variant" id="VAR_071218" description="In NPHS2." evidence="11">
    <original>T</original>
    <variation>P</variation>
    <location>
        <position position="116"/>
    </location>
</feature>
<feature type="sequence variant" id="VAR_071219" description="In NPHS2; dbSNP:rs869025495." evidence="7 20">
    <original>P</original>
    <variation>L</variation>
    <location>
        <position position="118"/>
    </location>
</feature>
<feature type="sequence variant" id="VAR_072143" description="In NPHS2; dbSNP:rs750332447." evidence="9">
    <original>W</original>
    <variation>L</variation>
    <location>
        <position position="122"/>
    </location>
</feature>
<feature type="sequence variant" id="VAR_071220" description="In NPHS2; dbSNP:rs750332447." evidence="21">
    <original>W</original>
    <variation>S</variation>
    <location>
        <position position="122"/>
    </location>
</feature>
<feature type="sequence variant" id="VAR_072144" description="In NPHS2; dbSNP:rs139290621." evidence="9">
    <original>C</original>
    <variation>W</variation>
    <location>
        <position position="124"/>
    </location>
</feature>
<feature type="sequence variant" id="VAR_072145" description="In NPHS2; dbSNP:rs267598208." evidence="13">
    <original>K</original>
    <variation>N</variation>
    <location>
        <position position="126"/>
    </location>
</feature>
<feature type="sequence variant" id="VAR_079808" description="In NPHS2." evidence="10">
    <location>
        <begin position="138"/>
        <end position="383"/>
    </location>
</feature>
<feature type="sequence variant" id="VAR_087598" description="In NPHS2." evidence="16">
    <original>R</original>
    <variation>P</variation>
    <location>
        <position position="138"/>
    </location>
</feature>
<feature type="sequence variant" id="VAR_010233" description="In NPHS2; dbSNP:rs74315342." evidence="4 10 15">
    <original>R</original>
    <variation>Q</variation>
    <location>
        <position position="138"/>
    </location>
</feature>
<feature type="sequence variant" id="VAR_072146" description="In NPHS2; dbSNP:rs1345260812." evidence="19">
    <original>L</original>
    <variation>R</variation>
    <location>
        <position position="139"/>
    </location>
</feature>
<feature type="sequence variant" id="VAR_072147" description="In NPHS2; dbSNP:rs12240233." evidence="19">
    <original>L</original>
    <variation>P</variation>
    <location>
        <position position="142"/>
    </location>
</feature>
<feature type="sequence variant" id="VAR_010234" description="In NPHS2; dbSNP:rs74315346." evidence="4 20">
    <original>D</original>
    <variation>G</variation>
    <location>
        <position position="160"/>
    </location>
</feature>
<feature type="sequence variant" id="VAR_071221" description="In NPHS2; dbSNP:rs786204583." evidence="7 20">
    <original>R</original>
    <variation>C</variation>
    <location>
        <position position="168"/>
    </location>
</feature>
<feature type="sequence variant" id="VAR_071222" description="In NPHS2; dbSNP:rs530318579." evidence="7 10 16">
    <original>R</original>
    <variation>H</variation>
    <location>
        <position position="168"/>
    </location>
</feature>
<feature type="sequence variant" id="VAR_071223" description="In NPHS2." evidence="7">
    <original>R</original>
    <variation>S</variation>
    <location>
        <position position="168"/>
    </location>
</feature>
<feature type="sequence variant" id="VAR_071224" description="In NPHS2; uncertain significance." evidence="7">
    <original>L</original>
    <variation>V</variation>
    <location>
        <position position="172"/>
    </location>
</feature>
<feature type="sequence variant" id="VAR_071225" description="In NPHS2; requires 2 nucleotide substitutions." evidence="21">
    <original>P</original>
    <variation>V</variation>
    <location>
        <position position="175"/>
    </location>
</feature>
<feature type="sequence variant" id="VAR_010235" description="In NPHS2; dbSNP:rs74315347." evidence="4 16 20">
    <original>V</original>
    <variation>M</variation>
    <location>
        <position position="180"/>
    </location>
</feature>
<feature type="sequence variant" id="VAR_071226" description="In NPHS2; dbSNP:rs2125784628." evidence="21">
    <original>D</original>
    <variation>Y</variation>
    <location>
        <position position="183"/>
    </location>
</feature>
<feature type="sequence variant" id="VAR_071227" description="In NPHS2; uncertain significance; dbSNP:rs1673966819." evidence="11">
    <original>M</original>
    <variation>I</variation>
    <location>
        <position position="187"/>
    </location>
</feature>
<feature type="sequence variant" id="VAR_072148" description="In NPHS2." evidence="9">
    <original>I</original>
    <variation>V</variation>
    <location>
        <position position="192"/>
    </location>
</feature>
<feature type="sequence variant" id="VAR_071228" description="In NPHS2; dbSNP:rs200587413." evidence="7">
    <original>A</original>
    <variation>T</variation>
    <location>
        <position position="208"/>
    </location>
</feature>
<feature type="sequence variant" id="VAR_072149" description="In NPHS2." evidence="9">
    <original>S</original>
    <variation>A</variation>
    <location>
        <position position="211"/>
    </location>
</feature>
<feature type="sequence variant" id="VAR_072150" description="In NPHS2." evidence="9">
    <original>A</original>
    <variation>T</variation>
    <location>
        <position position="213"/>
    </location>
</feature>
<feature type="sequence variant" id="VAR_072151" description="In NPHS2." evidence="9">
    <original>V</original>
    <variation>G</variation>
    <location>
        <position position="218"/>
    </location>
</feature>
<feature type="sequence variant" id="VAR_071229" description="In NPHS2." evidence="11">
    <original>T</original>
    <variation>I</variation>
    <location>
        <position position="221"/>
    </location>
</feature>
<feature type="sequence variant" id="VAR_072152" description="In NPHS2." evidence="9">
    <original>H</original>
    <variation>D</variation>
    <location>
        <position position="228"/>
    </location>
</feature>
<feature type="sequence variant" id="VAR_072153" description="In NPHS2." evidence="9">
    <original>R</original>
    <variation>L</variation>
    <location>
        <position position="229"/>
    </location>
</feature>
<feature type="sequence variant" id="VAR_071230" description="In NPHS2; uncertain significance; dbSNP:rs61747728." evidence="5 10 12 18 22 23 24">
    <original>R</original>
    <variation>Q</variation>
    <location>
        <position position="229"/>
    </location>
</feature>
<feature type="sequence variant" id="VAR_071231" description="In NPHS2." evidence="7">
    <location>
        <begin position="236"/>
        <end position="238"/>
    </location>
</feature>
<feature type="sequence variant" id="VAR_071232" description="In dbSNP:rs146906190." evidence="7 16 21">
    <original>E</original>
    <variation>Q</variation>
    <location>
        <position position="237"/>
    </location>
</feature>
<feature type="sequence variant" id="VAR_071233" description="In NPHS2; dbSNP:rs748812981." evidence="7 20">
    <original>R</original>
    <variation>S</variation>
    <location>
        <position position="238"/>
    </location>
</feature>
<feature type="sequence variant" id="VAR_071234" description="In dbSNP:rs61747727." evidence="7">
    <original>A</original>
    <variation>V</variation>
    <location>
        <position position="242"/>
    </location>
</feature>
<feature type="sequence variant" id="VAR_087599" description="In NPHS2; uncertain significance." evidence="16">
    <original>C</original>
    <variation>F</variation>
    <location>
        <position position="254"/>
    </location>
</feature>
<feature type="sequence variant" id="VAR_071235" description="In NPHS2; dbSNP:rs775006954." evidence="7 13 16 23">
    <original>V</original>
    <variation>E</variation>
    <location>
        <position position="260"/>
    </location>
</feature>
<feature type="sequence variant" id="VAR_071236" description="In dbSNP:rs369697947." evidence="11 21">
    <original>E</original>
    <variation>Q</variation>
    <location>
        <position position="264"/>
    </location>
</feature>
<feature type="sequence variant" id="VAR_072154" description="In NPHS2." evidence="9">
    <original>D</original>
    <variation>N</variation>
    <location>
        <position position="267"/>
    </location>
</feature>
<feature type="sequence variant" id="VAR_072155" description="In NPHS2." evidence="9">
    <original>V</original>
    <variation>L</variation>
    <location>
        <position position="268"/>
    </location>
</feature>
<feature type="sequence variant" id="VAR_072156" description="In NPHS2." evidence="9">
    <original>H</original>
    <variation>L</variation>
    <location>
        <position position="276"/>
    </location>
</feature>
<feature type="sequence variant" id="VAR_071237" description="In NPHS2." evidence="11">
    <original>E</original>
    <variation>A</variation>
    <location>
        <position position="281"/>
    </location>
</feature>
<feature type="sequence variant" id="VAR_071238" description="In NPHS2." evidence="21">
    <original>E</original>
    <variation>K</variation>
    <location>
        <position position="281"/>
    </location>
</feature>
<feature type="sequence variant" id="VAR_075617" description="In NPHS2; uncertain significance; dbSNP:rs780761368." evidence="23">
    <original>A</original>
    <variation>V</variation>
    <location>
        <position position="284"/>
    </location>
</feature>
<feature type="sequence variant" id="VAR_071239" description="In NPHS2; dbSNP:rs200482683." evidence="10 14 15">
    <original>V</original>
    <variation>M</variation>
    <location>
        <position position="290"/>
    </location>
</feature>
<feature type="sequence variant" id="VAR_010236" description="In NPHS2; dbSNP:rs74315348." evidence="4 10">
    <original>R</original>
    <variation>W</variation>
    <location>
        <position position="291"/>
    </location>
</feature>
<feature type="sequence variant" id="VAR_071240" description="In NPHS2." evidence="21">
    <original>E</original>
    <variation>K</variation>
    <location>
        <position position="296"/>
    </location>
</feature>
<feature type="sequence variant" id="VAR_079809" description="In dbSNP:rs199506378." evidence="10">
    <original>A</original>
    <variation>V</variation>
    <location>
        <position position="297"/>
    </location>
</feature>
<feature type="sequence variant" id="VAR_072157" description="In NPHS2." evidence="9">
    <location>
        <position position="301"/>
    </location>
</feature>
<feature type="sequence variant" id="VAR_071241" description="In NPHS2." evidence="21">
    <original>A</original>
    <variation>V</variation>
    <location>
        <position position="309"/>
    </location>
</feature>
<feature type="sequence variant" id="VAR_075618" description="In NPHS2; uncertain significance; dbSNP:rs1673254835." evidence="23">
    <original>E</original>
    <variation>K</variation>
    <location>
        <position position="310"/>
    </location>
</feature>
<feature type="sequence variant" id="VAR_079810" description="In NPHS2; uncertain significance; dbSNP:rs1572255744." evidence="10">
    <original>E</original>
    <variation>V</variation>
    <location>
        <position position="310"/>
    </location>
</feature>
<feature type="sequence variant" id="VAR_071242" description="In NPHS2; uncertain significance." evidence="21">
    <original>T</original>
    <variation>I</variation>
    <location>
        <position position="315"/>
    </location>
</feature>
<feature type="sequence variant" id="VAR_072158" description="In NPHS2; dbSNP:rs776859868." evidence="9">
    <original>R</original>
    <variation>Q</variation>
    <location>
        <position position="322"/>
    </location>
</feature>
<feature type="sequence variant" id="VAR_079811" description="In NPHS2; uncertain significance; dbSNP:rs1673239865." evidence="10">
    <original>Q</original>
    <variation>R</variation>
    <location>
        <position position="328"/>
    </location>
</feature>
<feature type="sequence variant" id="VAR_071243" description="In NPHS2; uncertain significance; dbSNP:rs866921812." evidence="21">
    <original>E</original>
    <variation>G</variation>
    <location>
        <position position="333"/>
    </location>
</feature>
<feature type="sequence variant" id="VAR_072159" description="In NPHS2; dbSNP:rs1214047676." evidence="13">
    <original>P</original>
    <variation>S</variation>
    <location>
        <position position="341"/>
    </location>
</feature>
<feature type="sequence variant" id="VAR_072160" description="In NPHS2." evidence="9">
    <original>V</original>
    <variation>G</variation>
    <location>
        <position position="370"/>
    </location>
</feature>
<feature type="glycosylation site" description="N-linked (GlcNAc...) asparagine" evidence="17">
    <location sequence="Q9NP85-2">
        <position position="287"/>
    </location>
</feature>
<accession>Q9NP85</accession>
<accession>B1AM32</accession>
<accession>B1AM33</accession>
<accession>Q8N6Q5</accession>
<proteinExistence type="evidence at protein level"/>
<protein>
    <recommendedName>
        <fullName evidence="25">Podocin</fullName>
    </recommendedName>
</protein>
<dbReference type="EMBL" id="AJ279246">
    <property type="protein sequence ID" value="CAB83272.1"/>
    <property type="molecule type" value="Genomic_DNA"/>
</dbReference>
<dbReference type="EMBL" id="AJ279247">
    <property type="protein sequence ID" value="CAB83272.1"/>
    <property type="status" value="JOINED"/>
    <property type="molecule type" value="Genomic_DNA"/>
</dbReference>
<dbReference type="EMBL" id="AJ279248">
    <property type="protein sequence ID" value="CAB83272.1"/>
    <property type="status" value="JOINED"/>
    <property type="molecule type" value="Genomic_DNA"/>
</dbReference>
<dbReference type="EMBL" id="AJ279249">
    <property type="protein sequence ID" value="CAB83272.1"/>
    <property type="status" value="JOINED"/>
    <property type="molecule type" value="Genomic_DNA"/>
</dbReference>
<dbReference type="EMBL" id="AJ279250">
    <property type="protein sequence ID" value="CAB83272.1"/>
    <property type="status" value="JOINED"/>
    <property type="molecule type" value="Genomic_DNA"/>
</dbReference>
<dbReference type="EMBL" id="AJ279251">
    <property type="protein sequence ID" value="CAB83272.1"/>
    <property type="status" value="JOINED"/>
    <property type="molecule type" value="Genomic_DNA"/>
</dbReference>
<dbReference type="EMBL" id="AJ279252">
    <property type="protein sequence ID" value="CAB83272.1"/>
    <property type="status" value="JOINED"/>
    <property type="molecule type" value="Genomic_DNA"/>
</dbReference>
<dbReference type="EMBL" id="AJ279253">
    <property type="protein sequence ID" value="CAB83272.1"/>
    <property type="status" value="JOINED"/>
    <property type="molecule type" value="Genomic_DNA"/>
</dbReference>
<dbReference type="EMBL" id="AJ279254">
    <property type="protein sequence ID" value="CAB83216.1"/>
    <property type="molecule type" value="mRNA"/>
</dbReference>
<dbReference type="EMBL" id="AL160286">
    <property type="status" value="NOT_ANNOTATED_CDS"/>
    <property type="molecule type" value="Genomic_DNA"/>
</dbReference>
<dbReference type="EMBL" id="CH471067">
    <property type="protein sequence ID" value="EAW91049.1"/>
    <property type="molecule type" value="Genomic_DNA"/>
</dbReference>
<dbReference type="EMBL" id="CH471067">
    <property type="protein sequence ID" value="EAW91050.1"/>
    <property type="molecule type" value="Genomic_DNA"/>
</dbReference>
<dbReference type="EMBL" id="BC029141">
    <property type="protein sequence ID" value="AAH29141.1"/>
    <property type="molecule type" value="mRNA"/>
</dbReference>
<dbReference type="CCDS" id="CCDS1331.1">
    <molecule id="Q9NP85-1"/>
</dbReference>
<dbReference type="CCDS" id="CCDS72988.1">
    <molecule id="Q9NP85-2"/>
</dbReference>
<dbReference type="RefSeq" id="NP_001284504.1">
    <molecule id="Q9NP85-2"/>
    <property type="nucleotide sequence ID" value="NM_001297575.2"/>
</dbReference>
<dbReference type="RefSeq" id="NP_055440.1">
    <molecule id="Q9NP85-1"/>
    <property type="nucleotide sequence ID" value="NM_014625.4"/>
</dbReference>
<dbReference type="SMR" id="Q9NP85"/>
<dbReference type="BioGRID" id="113590">
    <property type="interactions" value="9"/>
</dbReference>
<dbReference type="FunCoup" id="Q9NP85">
    <property type="interactions" value="35"/>
</dbReference>
<dbReference type="IntAct" id="Q9NP85">
    <property type="interactions" value="1"/>
</dbReference>
<dbReference type="STRING" id="9606.ENSP00000356587"/>
<dbReference type="TCDB" id="8.A.21.1.2">
    <property type="family name" value="the stomatin/podocin/band 7/nephrosis,2/spfh (stomatin) family"/>
</dbReference>
<dbReference type="GlyCosmos" id="Q9NP85">
    <property type="glycosylation" value="1 site, No reported glycans"/>
</dbReference>
<dbReference type="iPTMnet" id="Q9NP85"/>
<dbReference type="PhosphoSitePlus" id="Q9NP85"/>
<dbReference type="BioMuta" id="NPHS2"/>
<dbReference type="DMDM" id="12230467"/>
<dbReference type="MassIVE" id="Q9NP85"/>
<dbReference type="PaxDb" id="9606-ENSP00000356587"/>
<dbReference type="PeptideAtlas" id="Q9NP85"/>
<dbReference type="ProteomicsDB" id="81929">
    <molecule id="Q9NP85-1"/>
</dbReference>
<dbReference type="ProteomicsDB" id="81930">
    <molecule id="Q9NP85-2"/>
</dbReference>
<dbReference type="Antibodypedia" id="34420">
    <property type="antibodies" value="135 antibodies from 30 providers"/>
</dbReference>
<dbReference type="DNASU" id="7827"/>
<dbReference type="Ensembl" id="ENST00000367615.9">
    <molecule id="Q9NP85-1"/>
    <property type="protein sequence ID" value="ENSP00000356587.4"/>
    <property type="gene ID" value="ENSG00000116218.13"/>
</dbReference>
<dbReference type="Ensembl" id="ENST00000367616.4">
    <molecule id="Q9NP85-2"/>
    <property type="protein sequence ID" value="ENSP00000356588.4"/>
    <property type="gene ID" value="ENSG00000116218.13"/>
</dbReference>
<dbReference type="GeneID" id="7827"/>
<dbReference type="KEGG" id="hsa:7827"/>
<dbReference type="MANE-Select" id="ENST00000367615.9">
    <property type="protein sequence ID" value="ENSP00000356587.4"/>
    <property type="RefSeq nucleotide sequence ID" value="NM_014625.4"/>
    <property type="RefSeq protein sequence ID" value="NP_055440.1"/>
</dbReference>
<dbReference type="UCSC" id="uc001gmq.5">
    <molecule id="Q9NP85-1"/>
    <property type="organism name" value="human"/>
</dbReference>
<dbReference type="AGR" id="HGNC:13394"/>
<dbReference type="CTD" id="7827"/>
<dbReference type="DisGeNET" id="7827"/>
<dbReference type="GeneCards" id="NPHS2"/>
<dbReference type="HGNC" id="HGNC:13394">
    <property type="gene designation" value="NPHS2"/>
</dbReference>
<dbReference type="HPA" id="ENSG00000116218">
    <property type="expression patterns" value="Tissue enriched (kidney)"/>
</dbReference>
<dbReference type="MalaCards" id="NPHS2"/>
<dbReference type="MIM" id="600995">
    <property type="type" value="phenotype"/>
</dbReference>
<dbReference type="MIM" id="604766">
    <property type="type" value="gene"/>
</dbReference>
<dbReference type="neXtProt" id="NX_Q9NP85"/>
<dbReference type="OpenTargets" id="ENSG00000116218"/>
<dbReference type="Orphanet" id="656">
    <property type="disease" value="Hereditary steroid-resistant nephrotic syndrome"/>
</dbReference>
<dbReference type="PharmGKB" id="PA31710"/>
<dbReference type="VEuPathDB" id="HostDB:ENSG00000116218"/>
<dbReference type="eggNOG" id="KOG2621">
    <property type="taxonomic scope" value="Eukaryota"/>
</dbReference>
<dbReference type="GeneTree" id="ENSGT01030000234614"/>
<dbReference type="HOGENOM" id="CLU_024949_3_0_1"/>
<dbReference type="InParanoid" id="Q9NP85"/>
<dbReference type="OMA" id="AWDGFRA"/>
<dbReference type="OrthoDB" id="2105077at2759"/>
<dbReference type="PAN-GO" id="Q9NP85">
    <property type="GO annotations" value="1 GO annotation based on evolutionary models"/>
</dbReference>
<dbReference type="PhylomeDB" id="Q9NP85"/>
<dbReference type="TreeFam" id="TF105750"/>
<dbReference type="PathwayCommons" id="Q9NP85"/>
<dbReference type="Reactome" id="R-HSA-373753">
    <property type="pathway name" value="Nephrin family interactions"/>
</dbReference>
<dbReference type="SignaLink" id="Q9NP85"/>
<dbReference type="BioGRID-ORCS" id="7827">
    <property type="hits" value="11 hits in 1143 CRISPR screens"/>
</dbReference>
<dbReference type="ChiTaRS" id="NPHS2">
    <property type="organism name" value="human"/>
</dbReference>
<dbReference type="GeneWiki" id="NPHS2"/>
<dbReference type="GenomeRNAi" id="7827"/>
<dbReference type="Pharos" id="Q9NP85">
    <property type="development level" value="Tbio"/>
</dbReference>
<dbReference type="PRO" id="PR:Q9NP85"/>
<dbReference type="Proteomes" id="UP000005640">
    <property type="component" value="Chromosome 1"/>
</dbReference>
<dbReference type="RNAct" id="Q9NP85">
    <property type="molecule type" value="protein"/>
</dbReference>
<dbReference type="Bgee" id="ENSG00000116218">
    <property type="expression patterns" value="Expressed in renal glomerulus and 34 other cell types or tissues"/>
</dbReference>
<dbReference type="GO" id="GO:0005911">
    <property type="term" value="C:cell-cell junction"/>
    <property type="evidence" value="ECO:0000314"/>
    <property type="project" value="UniProtKB"/>
</dbReference>
<dbReference type="GO" id="GO:0009898">
    <property type="term" value="C:cytoplasmic side of plasma membrane"/>
    <property type="evidence" value="ECO:0000314"/>
    <property type="project" value="UniProtKB"/>
</dbReference>
<dbReference type="GO" id="GO:0005783">
    <property type="term" value="C:endoplasmic reticulum"/>
    <property type="evidence" value="ECO:0007669"/>
    <property type="project" value="UniProtKB-SubCell"/>
</dbReference>
<dbReference type="GO" id="GO:0070062">
    <property type="term" value="C:extracellular exosome"/>
    <property type="evidence" value="ECO:0007005"/>
    <property type="project" value="UniProtKB"/>
</dbReference>
<dbReference type="GO" id="GO:0045121">
    <property type="term" value="C:membrane raft"/>
    <property type="evidence" value="ECO:0000314"/>
    <property type="project" value="UniProtKB"/>
</dbReference>
<dbReference type="GO" id="GO:0005886">
    <property type="term" value="C:plasma membrane"/>
    <property type="evidence" value="ECO:0000318"/>
    <property type="project" value="GO_Central"/>
</dbReference>
<dbReference type="GO" id="GO:0032991">
    <property type="term" value="C:protein-containing complex"/>
    <property type="evidence" value="ECO:0000314"/>
    <property type="project" value="UniProtKB"/>
</dbReference>
<dbReference type="GO" id="GO:0036057">
    <property type="term" value="C:slit diaphragm"/>
    <property type="evidence" value="ECO:0007669"/>
    <property type="project" value="Ensembl"/>
</dbReference>
<dbReference type="GO" id="GO:0030036">
    <property type="term" value="P:actin cytoskeleton organization"/>
    <property type="evidence" value="ECO:0000314"/>
    <property type="project" value="UniProtKB"/>
</dbReference>
<dbReference type="GO" id="GO:0010467">
    <property type="term" value="P:gene expression"/>
    <property type="evidence" value="ECO:0007669"/>
    <property type="project" value="Ensembl"/>
</dbReference>
<dbReference type="GO" id="GO:0003094">
    <property type="term" value="P:glomerular filtration"/>
    <property type="evidence" value="ECO:0000304"/>
    <property type="project" value="ProtInc"/>
</dbReference>
<dbReference type="GO" id="GO:0072249">
    <property type="term" value="P:metanephric podocyte development"/>
    <property type="evidence" value="ECO:0000270"/>
    <property type="project" value="UniProtKB"/>
</dbReference>
<dbReference type="CDD" id="cd08827">
    <property type="entry name" value="SPFH_podocin"/>
    <property type="match status" value="1"/>
</dbReference>
<dbReference type="FunFam" id="3.30.479.30:FF:000004">
    <property type="entry name" value="Putative membrane protease family, stomatin"/>
    <property type="match status" value="1"/>
</dbReference>
<dbReference type="Gene3D" id="6.10.250.2090">
    <property type="match status" value="1"/>
</dbReference>
<dbReference type="Gene3D" id="3.30.479.30">
    <property type="entry name" value="Band 7 domain"/>
    <property type="match status" value="1"/>
</dbReference>
<dbReference type="InterPro" id="IPR043202">
    <property type="entry name" value="Band-7_stomatin-like"/>
</dbReference>
<dbReference type="InterPro" id="IPR001107">
    <property type="entry name" value="Band_7"/>
</dbReference>
<dbReference type="InterPro" id="IPR036013">
    <property type="entry name" value="Band_7/SPFH_dom_sf"/>
</dbReference>
<dbReference type="InterPro" id="IPR018080">
    <property type="entry name" value="Band_7/stomatin-like_CS"/>
</dbReference>
<dbReference type="InterPro" id="IPR001972">
    <property type="entry name" value="Stomatin_HflK_fam"/>
</dbReference>
<dbReference type="PANTHER" id="PTHR10264">
    <property type="entry name" value="BAND 7 PROTEIN-RELATED"/>
    <property type="match status" value="1"/>
</dbReference>
<dbReference type="PANTHER" id="PTHR10264:SF127">
    <property type="entry name" value="PODOCIN"/>
    <property type="match status" value="1"/>
</dbReference>
<dbReference type="Pfam" id="PF01145">
    <property type="entry name" value="Band_7"/>
    <property type="match status" value="1"/>
</dbReference>
<dbReference type="PRINTS" id="PR00721">
    <property type="entry name" value="STOMATIN"/>
</dbReference>
<dbReference type="SMART" id="SM00244">
    <property type="entry name" value="PHB"/>
    <property type="match status" value="1"/>
</dbReference>
<dbReference type="SUPFAM" id="SSF117892">
    <property type="entry name" value="Band 7/SPFH domain"/>
    <property type="match status" value="1"/>
</dbReference>
<dbReference type="PROSITE" id="PS01270">
    <property type="entry name" value="BAND_7"/>
    <property type="match status" value="1"/>
</dbReference>
<gene>
    <name type="primary">NPHS2</name>
</gene>